<reference key="1">
    <citation type="journal article" date="2011" name="PLoS ONE">
        <title>The genome of Akkermansia muciniphila, a dedicated intestinal mucin degrader, and its use in exploring intestinal metagenomes.</title>
        <authorList>
            <person name="van Passel M.W."/>
            <person name="Kant R."/>
            <person name="Zoetendal E.G."/>
            <person name="Plugge C.M."/>
            <person name="Derrien M."/>
            <person name="Malfatti S.A."/>
            <person name="Chain P.S."/>
            <person name="Woyke T."/>
            <person name="Palva A."/>
            <person name="de Vos W.M."/>
            <person name="Smidt H."/>
        </authorList>
    </citation>
    <scope>NUCLEOTIDE SEQUENCE [LARGE SCALE GENOMIC DNA]</scope>
    <source>
        <strain>ATCC BAA-835 / DSM 22959 / JCM 33894 / BCRC 81048 / CCUG 64013 / CIP 107961 / Muc</strain>
    </source>
</reference>
<gene>
    <name evidence="1" type="primary">dinB</name>
    <name type="ordered locus">Amuc_1330</name>
</gene>
<sequence length="359" mass="40891">MNQRKIIHVDMDAFYASIEQRDHPEYRGKPIAVGRPEMRGVVAAASYEARRFGVRSAMPSMKALKLCPHLIFTRNRMDVYKAVSAQIHAIFHRYTDLVEPLSLDEAFLDVTENKPGIPLAVDIARRIKKEIRRELHLTASAGVSYNKFLAKIASDYRKPDGLFTIHPSRAEKFIAALPIEAFWGVGHATAERMRALSITNGAQLRARDKDFLVRHFGKTGAIFYNFARGVDDRPVEPSRMRKSVGCEETYRENVTRAEALEQRLPLLAEELAGRLARSGFRGNTLTLKVKFPDFVQKTRCATVPEILTEKEGILPLARTLMEELDSGDRTFRLLGLSVSHPQEEQRQGIWEQLWLELEY</sequence>
<evidence type="ECO:0000255" key="1">
    <source>
        <dbReference type="HAMAP-Rule" id="MF_01113"/>
    </source>
</evidence>
<accession>B2UKN1</accession>
<organism>
    <name type="scientific">Akkermansia muciniphila (strain ATCC BAA-835 / DSM 22959 / JCM 33894 / BCRC 81048 / CCUG 64013 / CIP 107961 / Muc)</name>
    <dbReference type="NCBI Taxonomy" id="349741"/>
    <lineage>
        <taxon>Bacteria</taxon>
        <taxon>Pseudomonadati</taxon>
        <taxon>Verrucomicrobiota</taxon>
        <taxon>Verrucomicrobiia</taxon>
        <taxon>Verrucomicrobiales</taxon>
        <taxon>Akkermansiaceae</taxon>
        <taxon>Akkermansia</taxon>
    </lineage>
</organism>
<proteinExistence type="inferred from homology"/>
<comment type="function">
    <text evidence="1">Poorly processive, error-prone DNA polymerase involved in untargeted mutagenesis. Copies undamaged DNA at stalled replication forks, which arise in vivo from mismatched or misaligned primer ends. These misaligned primers can be extended by PolIV. Exhibits no 3'-5' exonuclease (proofreading) activity. May be involved in translesional synthesis, in conjunction with the beta clamp from PolIII.</text>
</comment>
<comment type="catalytic activity">
    <reaction evidence="1">
        <text>DNA(n) + a 2'-deoxyribonucleoside 5'-triphosphate = DNA(n+1) + diphosphate</text>
        <dbReference type="Rhea" id="RHEA:22508"/>
        <dbReference type="Rhea" id="RHEA-COMP:17339"/>
        <dbReference type="Rhea" id="RHEA-COMP:17340"/>
        <dbReference type="ChEBI" id="CHEBI:33019"/>
        <dbReference type="ChEBI" id="CHEBI:61560"/>
        <dbReference type="ChEBI" id="CHEBI:173112"/>
        <dbReference type="EC" id="2.7.7.7"/>
    </reaction>
</comment>
<comment type="cofactor">
    <cofactor evidence="1">
        <name>Mg(2+)</name>
        <dbReference type="ChEBI" id="CHEBI:18420"/>
    </cofactor>
    <text evidence="1">Binds 2 magnesium ions per subunit.</text>
</comment>
<comment type="subunit">
    <text evidence="1">Monomer.</text>
</comment>
<comment type="subcellular location">
    <subcellularLocation>
        <location evidence="1">Cytoplasm</location>
    </subcellularLocation>
</comment>
<comment type="similarity">
    <text evidence="1">Belongs to the DNA polymerase type-Y family.</text>
</comment>
<keyword id="KW-0963">Cytoplasm</keyword>
<keyword id="KW-0227">DNA damage</keyword>
<keyword id="KW-0234">DNA repair</keyword>
<keyword id="KW-0235">DNA replication</keyword>
<keyword id="KW-0238">DNA-binding</keyword>
<keyword id="KW-0239">DNA-directed DNA polymerase</keyword>
<keyword id="KW-0460">Magnesium</keyword>
<keyword id="KW-0479">Metal-binding</keyword>
<keyword id="KW-0515">Mutator protein</keyword>
<keyword id="KW-0548">Nucleotidyltransferase</keyword>
<keyword id="KW-1185">Reference proteome</keyword>
<keyword id="KW-0808">Transferase</keyword>
<protein>
    <recommendedName>
        <fullName evidence="1">DNA polymerase IV</fullName>
        <shortName evidence="1">Pol IV</shortName>
        <ecNumber evidence="1">2.7.7.7</ecNumber>
    </recommendedName>
</protein>
<feature type="chain" id="PRO_1000163996" description="DNA polymerase IV">
    <location>
        <begin position="1"/>
        <end position="359"/>
    </location>
</feature>
<feature type="domain" description="UmuC" evidence="1">
    <location>
        <begin position="6"/>
        <end position="186"/>
    </location>
</feature>
<feature type="active site" evidence="1">
    <location>
        <position position="105"/>
    </location>
</feature>
<feature type="binding site" evidence="1">
    <location>
        <position position="10"/>
    </location>
    <ligand>
        <name>Mg(2+)</name>
        <dbReference type="ChEBI" id="CHEBI:18420"/>
    </ligand>
</feature>
<feature type="binding site" evidence="1">
    <location>
        <position position="104"/>
    </location>
    <ligand>
        <name>Mg(2+)</name>
        <dbReference type="ChEBI" id="CHEBI:18420"/>
    </ligand>
</feature>
<feature type="site" description="Substrate discrimination" evidence="1">
    <location>
        <position position="15"/>
    </location>
</feature>
<dbReference type="EC" id="2.7.7.7" evidence="1"/>
<dbReference type="EMBL" id="CP001071">
    <property type="protein sequence ID" value="ACD05154.1"/>
    <property type="molecule type" value="Genomic_DNA"/>
</dbReference>
<dbReference type="RefSeq" id="WP_012420369.1">
    <property type="nucleotide sequence ID" value="NZ_CP071807.1"/>
</dbReference>
<dbReference type="SMR" id="B2UKN1"/>
<dbReference type="STRING" id="349741.Amuc_1330"/>
<dbReference type="PaxDb" id="349741-Amuc_1330"/>
<dbReference type="KEGG" id="amu:Amuc_1330"/>
<dbReference type="eggNOG" id="COG0389">
    <property type="taxonomic scope" value="Bacteria"/>
</dbReference>
<dbReference type="HOGENOM" id="CLU_012348_1_2_0"/>
<dbReference type="OrthoDB" id="9808813at2"/>
<dbReference type="BioCyc" id="AMUC349741:G1GBX-1418-MONOMER"/>
<dbReference type="Proteomes" id="UP000001031">
    <property type="component" value="Chromosome"/>
</dbReference>
<dbReference type="GO" id="GO:0005829">
    <property type="term" value="C:cytosol"/>
    <property type="evidence" value="ECO:0007669"/>
    <property type="project" value="TreeGrafter"/>
</dbReference>
<dbReference type="GO" id="GO:0003684">
    <property type="term" value="F:damaged DNA binding"/>
    <property type="evidence" value="ECO:0007669"/>
    <property type="project" value="InterPro"/>
</dbReference>
<dbReference type="GO" id="GO:0003887">
    <property type="term" value="F:DNA-directed DNA polymerase activity"/>
    <property type="evidence" value="ECO:0007669"/>
    <property type="project" value="UniProtKB-UniRule"/>
</dbReference>
<dbReference type="GO" id="GO:0000287">
    <property type="term" value="F:magnesium ion binding"/>
    <property type="evidence" value="ECO:0007669"/>
    <property type="project" value="UniProtKB-UniRule"/>
</dbReference>
<dbReference type="GO" id="GO:0006261">
    <property type="term" value="P:DNA-templated DNA replication"/>
    <property type="evidence" value="ECO:0007669"/>
    <property type="project" value="UniProtKB-UniRule"/>
</dbReference>
<dbReference type="GO" id="GO:0042276">
    <property type="term" value="P:error-prone translesion synthesis"/>
    <property type="evidence" value="ECO:0007669"/>
    <property type="project" value="TreeGrafter"/>
</dbReference>
<dbReference type="GO" id="GO:0009432">
    <property type="term" value="P:SOS response"/>
    <property type="evidence" value="ECO:0007669"/>
    <property type="project" value="TreeGrafter"/>
</dbReference>
<dbReference type="CDD" id="cd03586">
    <property type="entry name" value="PolY_Pol_IV_kappa"/>
    <property type="match status" value="1"/>
</dbReference>
<dbReference type="FunFam" id="3.30.1490.100:FF:000004">
    <property type="entry name" value="DNA polymerase IV"/>
    <property type="match status" value="1"/>
</dbReference>
<dbReference type="FunFam" id="3.40.1170.60:FF:000001">
    <property type="entry name" value="DNA polymerase IV"/>
    <property type="match status" value="1"/>
</dbReference>
<dbReference type="Gene3D" id="3.30.70.270">
    <property type="match status" value="1"/>
</dbReference>
<dbReference type="Gene3D" id="3.40.1170.60">
    <property type="match status" value="1"/>
</dbReference>
<dbReference type="Gene3D" id="1.10.150.20">
    <property type="entry name" value="5' to 3' exonuclease, C-terminal subdomain"/>
    <property type="match status" value="1"/>
</dbReference>
<dbReference type="Gene3D" id="3.30.1490.100">
    <property type="entry name" value="DNA polymerase, Y-family, little finger domain"/>
    <property type="match status" value="1"/>
</dbReference>
<dbReference type="HAMAP" id="MF_01113">
    <property type="entry name" value="DNApol_IV"/>
    <property type="match status" value="1"/>
</dbReference>
<dbReference type="InterPro" id="IPR043502">
    <property type="entry name" value="DNA/RNA_pol_sf"/>
</dbReference>
<dbReference type="InterPro" id="IPR036775">
    <property type="entry name" value="DNA_pol_Y-fam_lit_finger_sf"/>
</dbReference>
<dbReference type="InterPro" id="IPR017961">
    <property type="entry name" value="DNA_pol_Y-fam_little_finger"/>
</dbReference>
<dbReference type="InterPro" id="IPR050116">
    <property type="entry name" value="DNA_polymerase-Y"/>
</dbReference>
<dbReference type="InterPro" id="IPR022880">
    <property type="entry name" value="DNApol_IV"/>
</dbReference>
<dbReference type="InterPro" id="IPR043128">
    <property type="entry name" value="Rev_trsase/Diguanyl_cyclase"/>
</dbReference>
<dbReference type="InterPro" id="IPR001126">
    <property type="entry name" value="UmuC"/>
</dbReference>
<dbReference type="NCBIfam" id="NF002677">
    <property type="entry name" value="PRK02406.1"/>
    <property type="match status" value="1"/>
</dbReference>
<dbReference type="PANTHER" id="PTHR11076:SF33">
    <property type="entry name" value="DNA POLYMERASE KAPPA"/>
    <property type="match status" value="1"/>
</dbReference>
<dbReference type="PANTHER" id="PTHR11076">
    <property type="entry name" value="DNA REPAIR POLYMERASE UMUC / TRANSFERASE FAMILY MEMBER"/>
    <property type="match status" value="1"/>
</dbReference>
<dbReference type="Pfam" id="PF00817">
    <property type="entry name" value="IMS"/>
    <property type="match status" value="1"/>
</dbReference>
<dbReference type="Pfam" id="PF11799">
    <property type="entry name" value="IMS_C"/>
    <property type="match status" value="1"/>
</dbReference>
<dbReference type="SUPFAM" id="SSF56672">
    <property type="entry name" value="DNA/RNA polymerases"/>
    <property type="match status" value="1"/>
</dbReference>
<dbReference type="SUPFAM" id="SSF100879">
    <property type="entry name" value="Lesion bypass DNA polymerase (Y-family), little finger domain"/>
    <property type="match status" value="1"/>
</dbReference>
<dbReference type="PROSITE" id="PS50173">
    <property type="entry name" value="UMUC"/>
    <property type="match status" value="1"/>
</dbReference>
<name>DPO4_AKKM8</name>